<feature type="chain" id="PRO_0000416629" description="Putative uncharacterized protein CUNK4.20">
    <location>
        <begin position="1"/>
        <end position="74"/>
    </location>
</feature>
<dbReference type="EMBL" id="CU329670">
    <property type="protein sequence ID" value="CCD31323.1"/>
    <property type="molecule type" value="Genomic_DNA"/>
</dbReference>
<dbReference type="RefSeq" id="XP_004001778.1">
    <property type="nucleotide sequence ID" value="XM_004001729.1"/>
</dbReference>
<dbReference type="SMR" id="G2TRL8"/>
<dbReference type="PaxDb" id="4896-SPACUNK4.20.1"/>
<dbReference type="EnsemblFungi" id="SPACUNK4.20.1">
    <property type="protein sequence ID" value="SPACUNK4.20.1:pep"/>
    <property type="gene ID" value="SPACUNK4.20"/>
</dbReference>
<dbReference type="PomBase" id="SPACUNK4.20"/>
<dbReference type="VEuPathDB" id="FungiDB:SPACUNK4.20"/>
<dbReference type="HOGENOM" id="CLU_2689219_0_0_1"/>
<dbReference type="InParanoid" id="G2TRL8"/>
<dbReference type="PRO" id="PR:G2TRL8"/>
<dbReference type="Proteomes" id="UP000002485">
    <property type="component" value="Chromosome I"/>
</dbReference>
<accession>G2TRL8</accession>
<gene>
    <name type="ORF">SPACUNK4.20</name>
</gene>
<sequence>MRRSIDYFTEPSCLSSGIVDILNKGFLSNKSKSHTQTHKKTAVQLFRNLELSTTKNVMEMWGKQDILRFLCFSE</sequence>
<name>YEAK_SCHPO</name>
<protein>
    <recommendedName>
        <fullName>Putative uncharacterized protein CUNK4.20</fullName>
    </recommendedName>
</protein>
<proteinExistence type="predicted"/>
<organism>
    <name type="scientific">Schizosaccharomyces pombe (strain 972 / ATCC 24843)</name>
    <name type="common">Fission yeast</name>
    <dbReference type="NCBI Taxonomy" id="284812"/>
    <lineage>
        <taxon>Eukaryota</taxon>
        <taxon>Fungi</taxon>
        <taxon>Dikarya</taxon>
        <taxon>Ascomycota</taxon>
        <taxon>Taphrinomycotina</taxon>
        <taxon>Schizosaccharomycetes</taxon>
        <taxon>Schizosaccharomycetales</taxon>
        <taxon>Schizosaccharomycetaceae</taxon>
        <taxon>Schizosaccharomyces</taxon>
    </lineage>
</organism>
<reference key="1">
    <citation type="journal article" date="2002" name="Nature">
        <title>The genome sequence of Schizosaccharomyces pombe.</title>
        <authorList>
            <person name="Wood V."/>
            <person name="Gwilliam R."/>
            <person name="Rajandream M.A."/>
            <person name="Lyne M.H."/>
            <person name="Lyne R."/>
            <person name="Stewart A."/>
            <person name="Sgouros J.G."/>
            <person name="Peat N."/>
            <person name="Hayles J."/>
            <person name="Baker S.G."/>
            <person name="Basham D."/>
            <person name="Bowman S."/>
            <person name="Brooks K."/>
            <person name="Brown D."/>
            <person name="Brown S."/>
            <person name="Chillingworth T."/>
            <person name="Churcher C.M."/>
            <person name="Collins M."/>
            <person name="Connor R."/>
            <person name="Cronin A."/>
            <person name="Davis P."/>
            <person name="Feltwell T."/>
            <person name="Fraser A."/>
            <person name="Gentles S."/>
            <person name="Goble A."/>
            <person name="Hamlin N."/>
            <person name="Harris D.E."/>
            <person name="Hidalgo J."/>
            <person name="Hodgson G."/>
            <person name="Holroyd S."/>
            <person name="Hornsby T."/>
            <person name="Howarth S."/>
            <person name="Huckle E.J."/>
            <person name="Hunt S."/>
            <person name="Jagels K."/>
            <person name="James K.D."/>
            <person name="Jones L."/>
            <person name="Jones M."/>
            <person name="Leather S."/>
            <person name="McDonald S."/>
            <person name="McLean J."/>
            <person name="Mooney P."/>
            <person name="Moule S."/>
            <person name="Mungall K.L."/>
            <person name="Murphy L.D."/>
            <person name="Niblett D."/>
            <person name="Odell C."/>
            <person name="Oliver K."/>
            <person name="O'Neil S."/>
            <person name="Pearson D."/>
            <person name="Quail M.A."/>
            <person name="Rabbinowitsch E."/>
            <person name="Rutherford K.M."/>
            <person name="Rutter S."/>
            <person name="Saunders D."/>
            <person name="Seeger K."/>
            <person name="Sharp S."/>
            <person name="Skelton J."/>
            <person name="Simmonds M.N."/>
            <person name="Squares R."/>
            <person name="Squares S."/>
            <person name="Stevens K."/>
            <person name="Taylor K."/>
            <person name="Taylor R.G."/>
            <person name="Tivey A."/>
            <person name="Walsh S.V."/>
            <person name="Warren T."/>
            <person name="Whitehead S."/>
            <person name="Woodward J.R."/>
            <person name="Volckaert G."/>
            <person name="Aert R."/>
            <person name="Robben J."/>
            <person name="Grymonprez B."/>
            <person name="Weltjens I."/>
            <person name="Vanstreels E."/>
            <person name="Rieger M."/>
            <person name="Schaefer M."/>
            <person name="Mueller-Auer S."/>
            <person name="Gabel C."/>
            <person name="Fuchs M."/>
            <person name="Duesterhoeft A."/>
            <person name="Fritzc C."/>
            <person name="Holzer E."/>
            <person name="Moestl D."/>
            <person name="Hilbert H."/>
            <person name="Borzym K."/>
            <person name="Langer I."/>
            <person name="Beck A."/>
            <person name="Lehrach H."/>
            <person name="Reinhardt R."/>
            <person name="Pohl T.M."/>
            <person name="Eger P."/>
            <person name="Zimmermann W."/>
            <person name="Wedler H."/>
            <person name="Wambutt R."/>
            <person name="Purnelle B."/>
            <person name="Goffeau A."/>
            <person name="Cadieu E."/>
            <person name="Dreano S."/>
            <person name="Gloux S."/>
            <person name="Lelaure V."/>
            <person name="Mottier S."/>
            <person name="Galibert F."/>
            <person name="Aves S.J."/>
            <person name="Xiang Z."/>
            <person name="Hunt C."/>
            <person name="Moore K."/>
            <person name="Hurst S.M."/>
            <person name="Lucas M."/>
            <person name="Rochet M."/>
            <person name="Gaillardin C."/>
            <person name="Tallada V.A."/>
            <person name="Garzon A."/>
            <person name="Thode G."/>
            <person name="Daga R.R."/>
            <person name="Cruzado L."/>
            <person name="Jimenez J."/>
            <person name="Sanchez M."/>
            <person name="del Rey F."/>
            <person name="Benito J."/>
            <person name="Dominguez A."/>
            <person name="Revuelta J.L."/>
            <person name="Moreno S."/>
            <person name="Armstrong J."/>
            <person name="Forsburg S.L."/>
            <person name="Cerutti L."/>
            <person name="Lowe T."/>
            <person name="McCombie W.R."/>
            <person name="Paulsen I."/>
            <person name="Potashkin J."/>
            <person name="Shpakovski G.V."/>
            <person name="Ussery D."/>
            <person name="Barrell B.G."/>
            <person name="Nurse P."/>
        </authorList>
    </citation>
    <scope>NUCLEOTIDE SEQUENCE [LARGE SCALE GENOMIC DNA]</scope>
    <source>
        <strain>972 / ATCC 24843</strain>
    </source>
</reference>
<reference key="2">
    <citation type="journal article" date="2011" name="Science">
        <title>Comparative functional genomics of the fission yeasts.</title>
        <authorList>
            <person name="Rhind N."/>
            <person name="Chen Z."/>
            <person name="Yassour M."/>
            <person name="Thompson D.A."/>
            <person name="Haas B.J."/>
            <person name="Habib N."/>
            <person name="Wapinski I."/>
            <person name="Roy S."/>
            <person name="Lin M.F."/>
            <person name="Heiman D.I."/>
            <person name="Young S.K."/>
            <person name="Furuya K."/>
            <person name="Guo Y."/>
            <person name="Pidoux A."/>
            <person name="Chen H.M."/>
            <person name="Robbertse B."/>
            <person name="Goldberg J.M."/>
            <person name="Aoki K."/>
            <person name="Bayne E.H."/>
            <person name="Berlin A.M."/>
            <person name="Desjardins C.A."/>
            <person name="Dobbs E."/>
            <person name="Dukaj L."/>
            <person name="Fan L."/>
            <person name="FitzGerald M.G."/>
            <person name="French C."/>
            <person name="Gujja S."/>
            <person name="Hansen K."/>
            <person name="Keifenheim D."/>
            <person name="Levin J.Z."/>
            <person name="Mosher R.A."/>
            <person name="Mueller C.A."/>
            <person name="Pfiffner J."/>
            <person name="Priest M."/>
            <person name="Russ C."/>
            <person name="Smialowska A."/>
            <person name="Swoboda P."/>
            <person name="Sykes S.M."/>
            <person name="Vaughn M."/>
            <person name="Vengrova S."/>
            <person name="Yoder R."/>
            <person name="Zeng Q."/>
            <person name="Allshire R."/>
            <person name="Baulcombe D."/>
            <person name="Birren B.W."/>
            <person name="Brown W."/>
            <person name="Ekwall K."/>
            <person name="Kellis M."/>
            <person name="Leatherwood J."/>
            <person name="Levin H."/>
            <person name="Margalit H."/>
            <person name="Martienssen R."/>
            <person name="Nieduszynski C.A."/>
            <person name="Spatafora J.W."/>
            <person name="Friedman N."/>
            <person name="Dalgaard J.Z."/>
            <person name="Baumann P."/>
            <person name="Niki H."/>
            <person name="Regev A."/>
            <person name="Nusbaum C."/>
        </authorList>
    </citation>
    <scope>IDENTIFICATION</scope>
</reference>
<keyword id="KW-1185">Reference proteome</keyword>